<keyword id="KW-0472">Membrane</keyword>
<keyword id="KW-1185">Reference proteome</keyword>
<keyword id="KW-0812">Transmembrane</keyword>
<keyword id="KW-1133">Transmembrane helix</keyword>
<reference key="1">
    <citation type="submission" date="2003-01" db="EMBL/GenBank/DDBJ databases">
        <title>Mus musculus cDNA for UbiE-YGHL1 intergenic splicing product, complete CDS.</title>
        <authorList>
            <person name="Abe S."/>
        </authorList>
    </citation>
    <scope>NUCLEOTIDE SEQUENCE [MRNA]</scope>
</reference>
<comment type="subcellular location">
    <subcellularLocation>
        <location evidence="2">Membrane</location>
        <topology evidence="2">Multi-pass membrane protein</topology>
    </subcellularLocation>
</comment>
<sequence length="96" mass="10825">MSSDEWSAAEDEGQLSRLLRKSRDSPFVPVGMAGFVAVLSYGLYKLNSRREQKMSLHLIHVRVAAQGCVVGAVTLGVLYSMYKDYIRPRFFNVPKK</sequence>
<proteinExistence type="inferred from homology"/>
<protein>
    <recommendedName>
        <fullName>HIG1 domain family member 1C</fullName>
    </recommendedName>
</protein>
<evidence type="ECO:0000255" key="1"/>
<evidence type="ECO:0000255" key="2">
    <source>
        <dbReference type="PROSITE-ProRule" id="PRU00836"/>
    </source>
</evidence>
<accession>Q76I25</accession>
<name>HIG1C_MOUSE</name>
<gene>
    <name type="primary">Higd1c</name>
    <name type="synonym">Gm921</name>
    <name type="synonym">Hig1-4</name>
    <name type="synonym">Ubie</name>
</gene>
<feature type="chain" id="PRO_0000215776" description="HIG1 domain family member 1C">
    <location>
        <begin position="1"/>
        <end position="96"/>
    </location>
</feature>
<feature type="topological domain" description="Cytoplasmic" evidence="1">
    <location>
        <begin position="1"/>
        <end position="26"/>
    </location>
</feature>
<feature type="transmembrane region" description="Helical" evidence="2">
    <location>
        <begin position="27"/>
        <end position="44"/>
    </location>
</feature>
<feature type="topological domain" description="Extracellular" evidence="1">
    <location>
        <begin position="45"/>
        <end position="58"/>
    </location>
</feature>
<feature type="transmembrane region" description="Helical" evidence="2">
    <location>
        <begin position="59"/>
        <end position="81"/>
    </location>
</feature>
<feature type="topological domain" description="Cytoplasmic" evidence="1">
    <location>
        <begin position="82"/>
        <end position="96"/>
    </location>
</feature>
<feature type="domain" description="HIG1" evidence="2">
    <location>
        <begin position="1"/>
        <end position="91"/>
    </location>
</feature>
<dbReference type="EMBL" id="AB099517">
    <property type="protein sequence ID" value="BAD06947.1"/>
    <property type="molecule type" value="mRNA"/>
</dbReference>
<dbReference type="CCDS" id="CCDS37210.1"/>
<dbReference type="RefSeq" id="NP_001002900.1">
    <property type="nucleotide sequence ID" value="NM_001002900.1"/>
</dbReference>
<dbReference type="SMR" id="Q76I25"/>
<dbReference type="FunCoup" id="Q76I25">
    <property type="interactions" value="198"/>
</dbReference>
<dbReference type="STRING" id="10090.ENSMUSP00000075098"/>
<dbReference type="PhosphoSitePlus" id="Q76I25"/>
<dbReference type="PaxDb" id="10090-ENSMUSP00000075098"/>
<dbReference type="Antibodypedia" id="67248">
    <property type="antibodies" value="37 antibodies from 11 providers"/>
</dbReference>
<dbReference type="Ensembl" id="ENSMUST00000175683.8">
    <property type="protein sequence ID" value="ENSMUSP00000134927.2"/>
    <property type="gene ID" value="ENSMUSG00000093550.8"/>
</dbReference>
<dbReference type="Ensembl" id="ENSMUST00000177211.2">
    <property type="protein sequence ID" value="ENSMUSP00000134848.2"/>
    <property type="gene ID" value="ENSMUSG00000093550.8"/>
</dbReference>
<dbReference type="GeneID" id="380975"/>
<dbReference type="KEGG" id="mmu:380975"/>
<dbReference type="UCSC" id="uc007xrb.1">
    <property type="organism name" value="mouse"/>
</dbReference>
<dbReference type="AGR" id="MGI:2685767"/>
<dbReference type="CTD" id="613227"/>
<dbReference type="MGI" id="MGI:2685767">
    <property type="gene designation" value="Higd1c"/>
</dbReference>
<dbReference type="VEuPathDB" id="HostDB:ENSMUSG00000093550"/>
<dbReference type="eggNOG" id="KOG4431">
    <property type="taxonomic scope" value="Eukaryota"/>
</dbReference>
<dbReference type="GeneTree" id="ENSGT00940000162804"/>
<dbReference type="HOGENOM" id="CLU_153308_2_0_1"/>
<dbReference type="InParanoid" id="Q76I25"/>
<dbReference type="OMA" id="VRILACP"/>
<dbReference type="OrthoDB" id="10003563at2759"/>
<dbReference type="PhylomeDB" id="Q76I25"/>
<dbReference type="TreeFam" id="TF314628"/>
<dbReference type="Reactome" id="R-MMU-5628897">
    <property type="pathway name" value="TP53 Regulates Metabolic Genes"/>
</dbReference>
<dbReference type="Reactome" id="R-MMU-611105">
    <property type="pathway name" value="Respiratory electron transport"/>
</dbReference>
<dbReference type="Reactome" id="R-MMU-9707564">
    <property type="pathway name" value="Cytoprotection by HMOX1"/>
</dbReference>
<dbReference type="BioGRID-ORCS" id="380975">
    <property type="hits" value="0 hits in 40 CRISPR screens"/>
</dbReference>
<dbReference type="PRO" id="PR:Q76I25"/>
<dbReference type="Proteomes" id="UP000000589">
    <property type="component" value="Chromosome 15"/>
</dbReference>
<dbReference type="RNAct" id="Q76I25">
    <property type="molecule type" value="protein"/>
</dbReference>
<dbReference type="Bgee" id="ENSMUSG00000093550">
    <property type="expression patterns" value="Expressed in proximal tubule and 16 other cell types or tissues"/>
</dbReference>
<dbReference type="ExpressionAtlas" id="Q76I25">
    <property type="expression patterns" value="baseline and differential"/>
</dbReference>
<dbReference type="GO" id="GO:0016020">
    <property type="term" value="C:membrane"/>
    <property type="evidence" value="ECO:0007669"/>
    <property type="project" value="UniProtKB-SubCell"/>
</dbReference>
<dbReference type="GO" id="GO:0001666">
    <property type="term" value="P:response to hypoxia"/>
    <property type="evidence" value="ECO:0000315"/>
    <property type="project" value="MGI"/>
</dbReference>
<dbReference type="Gene3D" id="6.10.140.1320">
    <property type="match status" value="1"/>
</dbReference>
<dbReference type="InterPro" id="IPR007667">
    <property type="entry name" value="Hypoxia_induced_domain"/>
</dbReference>
<dbReference type="InterPro" id="IPR050355">
    <property type="entry name" value="RCF1"/>
</dbReference>
<dbReference type="PANTHER" id="PTHR12297:SF10">
    <property type="entry name" value="HIG1 DOMAIN FAMILY MEMBER 1C"/>
    <property type="match status" value="1"/>
</dbReference>
<dbReference type="PANTHER" id="PTHR12297">
    <property type="entry name" value="HYPOXIA-INDUCBILE GENE 1 HIG1 -RELATED"/>
    <property type="match status" value="1"/>
</dbReference>
<dbReference type="Pfam" id="PF04588">
    <property type="entry name" value="HIG_1_N"/>
    <property type="match status" value="1"/>
</dbReference>
<dbReference type="PROSITE" id="PS51503">
    <property type="entry name" value="HIG1"/>
    <property type="match status" value="1"/>
</dbReference>
<organism>
    <name type="scientific">Mus musculus</name>
    <name type="common">Mouse</name>
    <dbReference type="NCBI Taxonomy" id="10090"/>
    <lineage>
        <taxon>Eukaryota</taxon>
        <taxon>Metazoa</taxon>
        <taxon>Chordata</taxon>
        <taxon>Craniata</taxon>
        <taxon>Vertebrata</taxon>
        <taxon>Euteleostomi</taxon>
        <taxon>Mammalia</taxon>
        <taxon>Eutheria</taxon>
        <taxon>Euarchontoglires</taxon>
        <taxon>Glires</taxon>
        <taxon>Rodentia</taxon>
        <taxon>Myomorpha</taxon>
        <taxon>Muroidea</taxon>
        <taxon>Muridae</taxon>
        <taxon>Murinae</taxon>
        <taxon>Mus</taxon>
        <taxon>Mus</taxon>
    </lineage>
</organism>